<keyword id="KW-0235">DNA replication</keyword>
<keyword id="KW-0238">DNA-binding</keyword>
<keyword id="KW-0239">DNA-directed DNA polymerase</keyword>
<keyword id="KW-0244">Early protein</keyword>
<keyword id="KW-0548">Nucleotidyltransferase</keyword>
<keyword id="KW-0677">Repeat</keyword>
<keyword id="KW-0808">Transferase</keyword>
<keyword id="KW-1194">Viral DNA replication</keyword>
<reference key="1">
    <citation type="submission" date="2003-03" db="EMBL/GenBank/DDBJ databases">
        <title>African swine fever virus genomes.</title>
        <authorList>
            <person name="Kutish G.F."/>
            <person name="Rock D.L."/>
        </authorList>
    </citation>
    <scope>NUCLEOTIDE SEQUENCE [GENOMIC DNA]</scope>
</reference>
<comment type="function">
    <text evidence="1">DNA-directed DNA polymerase involved in viral DNA replication.</text>
</comment>
<comment type="catalytic activity">
    <reaction>
        <text>DNA(n) + a 2'-deoxyribonucleoside 5'-triphosphate = DNA(n+1) + diphosphate</text>
        <dbReference type="Rhea" id="RHEA:22508"/>
        <dbReference type="Rhea" id="RHEA-COMP:17339"/>
        <dbReference type="Rhea" id="RHEA-COMP:17340"/>
        <dbReference type="ChEBI" id="CHEBI:33019"/>
        <dbReference type="ChEBI" id="CHEBI:61560"/>
        <dbReference type="ChEBI" id="CHEBI:173112"/>
        <dbReference type="EC" id="2.7.7.7"/>
    </reaction>
</comment>
<comment type="induction">
    <text evidence="3">Expressed in the early phase of the viral replicative cycle.</text>
</comment>
<comment type="miscellaneous">
    <text>Consistent with its intracellular location, ASFV encodes its own replicative DNA polymerase and three base excision repair enzymes: a class II AP endonuclease, the repair polymerase Pol X, and an ATP-dependent DNA ligase.</text>
</comment>
<comment type="similarity">
    <text evidence="3">Belongs to the DNA polymerase type-B family.</text>
</comment>
<organismHost>
    <name type="scientific">Ornithodoros</name>
    <name type="common">relapsing fever ticks</name>
    <dbReference type="NCBI Taxonomy" id="6937"/>
</organismHost>
<organismHost>
    <name type="scientific">Phacochoerus aethiopicus</name>
    <name type="common">Warthog</name>
    <dbReference type="NCBI Taxonomy" id="85517"/>
</organismHost>
<organismHost>
    <name type="scientific">Phacochoerus africanus</name>
    <name type="common">Warthog</name>
    <dbReference type="NCBI Taxonomy" id="41426"/>
</organismHost>
<organismHost>
    <name type="scientific">Potamochoerus larvatus</name>
    <name type="common">Bushpig</name>
    <dbReference type="NCBI Taxonomy" id="273792"/>
</organismHost>
<organismHost>
    <name type="scientific">Sus scrofa</name>
    <name type="common">Pig</name>
    <dbReference type="NCBI Taxonomy" id="9823"/>
</organismHost>
<sequence>MDRSEIVARENPVITQRVTNLLQTNAPLLFMPIDIHEVRYGAYTLFMYGSLENGYKAEVRIENIPVFFDVQIESSNTNQLFLKSLLSAENITYERLETLTQRPVMGYREKEKEFAPYIRIFFKSLYERRKAITYLNNMGYNTAADDTTCYYRMVSRELKLPLTSWIQLQHYSYEPHGLVHRFSVTPEDLVSYQDDGPTDHSIVMAYDIETYSPVKGTVPDPNQANDVVFMICMRIFWIHSTEPLASTCITMAPCKKSSEWTTILCSSEKNLLLSFAEQFSRWAPDICTGFNDSRYDWPFIVEKSMQHGILEEIFNKMSLFWHQKLDTILKCYYVKEKRVKISAEKSIISSFLHTPGCLPIDVRNMCMQLYPKAEKTSLKAFLENCGLDSKVDLPYHLMWKYYETRDSEKMADVAYYCIIDAQRCQDLLVRHNVIPDRREVGILSYTSLYDCIYYAGGHKVCNMLIAYAIHDEYGRIACSTIARGKREHGKYPGAFVIDPVKGLEQDKPTTGLDFASLYPSLIMAYNFSPEKFVASREEANSLMAKGESLHYVSFYFNNRLVEGWFVRHNNVPDKMGLYPKVLIDLLNKRTALKQELKKLGEKKECIHESHPGFKELQFRHAMVDAKQKALKIFMNTFYGEAGNNLSPFFLLPLAGGVTSSGQYNLKLVYNFVINKGYGIKYGDTDSLYITCPDSLYTEVTDAYLNSQKTIKHYEQLCHEKVLLSMKAMSTLCAEVNEYLRQDNGTSYLRMAYEEVLFPVCFTGKKKYYGIAHVNTPNFNTKELFIRGIDIIKQGQTKLTKTIGTRIMEESMKLRRPEDHRPPLIEIVKTVLKDAVVNMKQWNFEDFIQTDAWRPDKDNKAVQIFMSRMHARREQLKKHGAAASQFAEPEPGERFSYVIVEKQVQFDIQGHRTDSSRKGDKMEYVSEAKAKNLPIDILFYINNYVLGLCARFINENEEFQPPDNVSNKDEYAQRRAKSYLQKFVQSIHPKDKSVIKQGIVHRQCYKYVHQEIKKKIGIFADLYKEFFNNTTNPIESFIQSTQFMIQYFDGEQKVNHSMKKMIEQHATASNRAGNPAGNPAGNALMRAIFTQLITEEKKIVQALYNKGDAIHDLLTYIINNINYKIATFQTKQMLTFEFSSTHVELLLKLNKTWLILAGIHVAKKHLQALLDSYNNEPPSKTFIQQAIEEECGSIKPSCYDFIS</sequence>
<protein>
    <recommendedName>
        <fullName evidence="2">DNA polymerase beta</fullName>
        <ecNumber>2.7.7.7</ecNumber>
    </recommendedName>
</protein>
<gene>
    <name type="primary">DPOL</name>
    <name type="ordered locus">Pret-102</name>
</gene>
<name>DPOL_ASFP4</name>
<dbReference type="EC" id="2.7.7.7"/>
<dbReference type="EMBL" id="AY261363">
    <property type="status" value="NOT_ANNOTATED_CDS"/>
    <property type="molecule type" value="Genomic_DNA"/>
</dbReference>
<dbReference type="SMR" id="P0C971"/>
<dbReference type="Proteomes" id="UP000000859">
    <property type="component" value="Segment"/>
</dbReference>
<dbReference type="GO" id="GO:0003677">
    <property type="term" value="F:DNA binding"/>
    <property type="evidence" value="ECO:0007669"/>
    <property type="project" value="UniProtKB-KW"/>
</dbReference>
<dbReference type="GO" id="GO:0003887">
    <property type="term" value="F:DNA-directed DNA polymerase activity"/>
    <property type="evidence" value="ECO:0007669"/>
    <property type="project" value="UniProtKB-KW"/>
</dbReference>
<dbReference type="GO" id="GO:0000166">
    <property type="term" value="F:nucleotide binding"/>
    <property type="evidence" value="ECO:0007669"/>
    <property type="project" value="InterPro"/>
</dbReference>
<dbReference type="GO" id="GO:0006260">
    <property type="term" value="P:DNA replication"/>
    <property type="evidence" value="ECO:0007669"/>
    <property type="project" value="UniProtKB-KW"/>
</dbReference>
<dbReference type="GO" id="GO:0039693">
    <property type="term" value="P:viral DNA genome replication"/>
    <property type="evidence" value="ECO:0007669"/>
    <property type="project" value="UniProtKB-KW"/>
</dbReference>
<dbReference type="Gene3D" id="1.10.132.60">
    <property type="entry name" value="DNA polymerase family B, C-terminal domain"/>
    <property type="match status" value="1"/>
</dbReference>
<dbReference type="Gene3D" id="1.10.287.690">
    <property type="entry name" value="Helix hairpin bin"/>
    <property type="match status" value="1"/>
</dbReference>
<dbReference type="Gene3D" id="3.90.1600.10">
    <property type="entry name" value="Palm domain of DNA polymerase"/>
    <property type="match status" value="1"/>
</dbReference>
<dbReference type="Gene3D" id="3.30.420.10">
    <property type="entry name" value="Ribonuclease H-like superfamily/Ribonuclease H"/>
    <property type="match status" value="1"/>
</dbReference>
<dbReference type="InterPro" id="IPR006172">
    <property type="entry name" value="DNA-dir_DNA_pol_B"/>
</dbReference>
<dbReference type="InterPro" id="IPR017964">
    <property type="entry name" value="DNA-dir_DNA_pol_B_CS"/>
</dbReference>
<dbReference type="InterPro" id="IPR006133">
    <property type="entry name" value="DNA-dir_DNA_pol_B_exonuc"/>
</dbReference>
<dbReference type="InterPro" id="IPR006134">
    <property type="entry name" value="DNA-dir_DNA_pol_B_multi_dom"/>
</dbReference>
<dbReference type="InterPro" id="IPR043502">
    <property type="entry name" value="DNA/RNA_pol_sf"/>
</dbReference>
<dbReference type="InterPro" id="IPR042087">
    <property type="entry name" value="DNA_pol_B_thumb"/>
</dbReference>
<dbReference type="InterPro" id="IPR023211">
    <property type="entry name" value="DNA_pol_palm_dom_sf"/>
</dbReference>
<dbReference type="InterPro" id="IPR050240">
    <property type="entry name" value="DNA_pol_type-B"/>
</dbReference>
<dbReference type="InterPro" id="IPR012337">
    <property type="entry name" value="RNaseH-like_sf"/>
</dbReference>
<dbReference type="InterPro" id="IPR036397">
    <property type="entry name" value="RNaseH_sf"/>
</dbReference>
<dbReference type="PANTHER" id="PTHR10322">
    <property type="entry name" value="DNA POLYMERASE CATALYTIC SUBUNIT"/>
    <property type="match status" value="1"/>
</dbReference>
<dbReference type="PANTHER" id="PTHR10322:SF23">
    <property type="entry name" value="DNA POLYMERASE DELTA CATALYTIC SUBUNIT"/>
    <property type="match status" value="1"/>
</dbReference>
<dbReference type="Pfam" id="PF00136">
    <property type="entry name" value="DNA_pol_B"/>
    <property type="match status" value="1"/>
</dbReference>
<dbReference type="Pfam" id="PF03104">
    <property type="entry name" value="DNA_pol_B_exo1"/>
    <property type="match status" value="1"/>
</dbReference>
<dbReference type="PRINTS" id="PR00106">
    <property type="entry name" value="DNAPOLB"/>
</dbReference>
<dbReference type="SMART" id="SM00486">
    <property type="entry name" value="POLBc"/>
    <property type="match status" value="1"/>
</dbReference>
<dbReference type="SUPFAM" id="SSF56672">
    <property type="entry name" value="DNA/RNA polymerases"/>
    <property type="match status" value="1"/>
</dbReference>
<dbReference type="SUPFAM" id="SSF53098">
    <property type="entry name" value="Ribonuclease H-like"/>
    <property type="match status" value="1"/>
</dbReference>
<dbReference type="PROSITE" id="PS00116">
    <property type="entry name" value="DNA_POLYMERASE_B"/>
    <property type="match status" value="1"/>
</dbReference>
<accession>P0C971</accession>
<organism>
    <name type="scientific">African swine fever virus (isolate Tick/South Africa/Pretoriuskop Pr4/1996)</name>
    <name type="common">ASFV</name>
    <dbReference type="NCBI Taxonomy" id="561443"/>
    <lineage>
        <taxon>Viruses</taxon>
        <taxon>Varidnaviria</taxon>
        <taxon>Bamfordvirae</taxon>
        <taxon>Nucleocytoviricota</taxon>
        <taxon>Pokkesviricetes</taxon>
        <taxon>Asfuvirales</taxon>
        <taxon>Asfarviridae</taxon>
        <taxon>Asfivirus</taxon>
        <taxon>African swine fever virus</taxon>
    </lineage>
</organism>
<proteinExistence type="inferred from homology"/>
<evidence type="ECO:0000250" key="1"/>
<evidence type="ECO:0000250" key="2">
    <source>
        <dbReference type="UniProtKB" id="P42489"/>
    </source>
</evidence>
<evidence type="ECO:0000305" key="3"/>
<feature type="chain" id="PRO_0000373070" description="DNA polymerase beta">
    <location>
        <begin position="1"/>
        <end position="1202"/>
    </location>
</feature>
<feature type="repeat" description="1">
    <location>
        <begin position="1071"/>
        <end position="1074"/>
    </location>
</feature>
<feature type="repeat" description="2">
    <location>
        <begin position="1075"/>
        <end position="1078"/>
    </location>
</feature>
<feature type="repeat" description="3">
    <location>
        <begin position="1079"/>
        <end position="1082"/>
    </location>
</feature>
<feature type="region of interest" description="3 X 4 AA tandem repeats of A-G-[NK]-[PA]">
    <location>
        <begin position="1071"/>
        <end position="1082"/>
    </location>
</feature>